<protein>
    <recommendedName>
        <fullName evidence="1">Bis(5'-nucleosyl)-tetraphosphatase, symmetrical</fullName>
        <ecNumber evidence="1">3.6.1.41</ecNumber>
    </recommendedName>
    <alternativeName>
        <fullName evidence="1">Ap4A hydrolase</fullName>
    </alternativeName>
    <alternativeName>
        <fullName evidence="1">Diadenosine 5',5'''-P1,P4-tetraphosphate pyrophosphohydrolase</fullName>
    </alternativeName>
    <alternativeName>
        <fullName evidence="1">Diadenosine tetraphosphatase</fullName>
    </alternativeName>
</protein>
<sequence length="282" mass="31474">MSTYLIGDVHGCYDELIALLAQVEFDPSTDTLWLTGDLVARGPGSLEVLRYVKSLGDSVRLVLGNHDLHLLAVFAGISRNKPKDRLKSLLEAPDADELLNWLRRQPLLQVDEEKKLVMAHAGITPQWDLETAQQCARDVEAVLSSDSYPFFLDAMYGDMPNHWSNELSGLARLRFISNAFTRMRYCFPNGQLDMYSKEAPEDAPAPLKPWFAIPGPVSNAYSIAFGHWASLEGRGTPEGIYALDTGCCWGGELTCLRWEDKQYFTQPSNRQKSLDEGEAVAS</sequence>
<organism>
    <name type="scientific">Klebsiella pneumoniae (strain 342)</name>
    <dbReference type="NCBI Taxonomy" id="507522"/>
    <lineage>
        <taxon>Bacteria</taxon>
        <taxon>Pseudomonadati</taxon>
        <taxon>Pseudomonadota</taxon>
        <taxon>Gammaproteobacteria</taxon>
        <taxon>Enterobacterales</taxon>
        <taxon>Enterobacteriaceae</taxon>
        <taxon>Klebsiella/Raoultella group</taxon>
        <taxon>Klebsiella</taxon>
        <taxon>Klebsiella pneumoniae complex</taxon>
    </lineage>
</organism>
<name>APAH_KLEP3</name>
<accession>B5Y1Z6</accession>
<dbReference type="EC" id="3.6.1.41" evidence="1"/>
<dbReference type="EMBL" id="CP000964">
    <property type="protein sequence ID" value="ACI10507.1"/>
    <property type="molecule type" value="Genomic_DNA"/>
</dbReference>
<dbReference type="SMR" id="B5Y1Z6"/>
<dbReference type="KEGG" id="kpe:KPK_4696"/>
<dbReference type="HOGENOM" id="CLU_056184_2_0_6"/>
<dbReference type="Proteomes" id="UP000001734">
    <property type="component" value="Chromosome"/>
</dbReference>
<dbReference type="GO" id="GO:0008803">
    <property type="term" value="F:bis(5'-nucleosyl)-tetraphosphatase (symmetrical) activity"/>
    <property type="evidence" value="ECO:0007669"/>
    <property type="project" value="UniProtKB-UniRule"/>
</dbReference>
<dbReference type="CDD" id="cd07422">
    <property type="entry name" value="MPP_ApaH"/>
    <property type="match status" value="1"/>
</dbReference>
<dbReference type="FunFam" id="3.60.21.10:FF:000013">
    <property type="entry name" value="Bis(5'-nucleosyl)-tetraphosphatase, symmetrical"/>
    <property type="match status" value="1"/>
</dbReference>
<dbReference type="Gene3D" id="3.60.21.10">
    <property type="match status" value="1"/>
</dbReference>
<dbReference type="HAMAP" id="MF_00199">
    <property type="entry name" value="ApaH"/>
    <property type="match status" value="1"/>
</dbReference>
<dbReference type="InterPro" id="IPR004617">
    <property type="entry name" value="ApaH"/>
</dbReference>
<dbReference type="InterPro" id="IPR004843">
    <property type="entry name" value="Calcineurin-like_PHP_ApaH"/>
</dbReference>
<dbReference type="InterPro" id="IPR029052">
    <property type="entry name" value="Metallo-depent_PP-like"/>
</dbReference>
<dbReference type="NCBIfam" id="TIGR00668">
    <property type="entry name" value="apaH"/>
    <property type="match status" value="1"/>
</dbReference>
<dbReference type="NCBIfam" id="NF001204">
    <property type="entry name" value="PRK00166.1"/>
    <property type="match status" value="1"/>
</dbReference>
<dbReference type="PANTHER" id="PTHR40942">
    <property type="match status" value="1"/>
</dbReference>
<dbReference type="PANTHER" id="PTHR40942:SF4">
    <property type="entry name" value="CYTOCHROME C5"/>
    <property type="match status" value="1"/>
</dbReference>
<dbReference type="Pfam" id="PF00149">
    <property type="entry name" value="Metallophos"/>
    <property type="match status" value="1"/>
</dbReference>
<dbReference type="PIRSF" id="PIRSF000903">
    <property type="entry name" value="B5n-ttraPtase_sm"/>
    <property type="match status" value="1"/>
</dbReference>
<dbReference type="SUPFAM" id="SSF56300">
    <property type="entry name" value="Metallo-dependent phosphatases"/>
    <property type="match status" value="1"/>
</dbReference>
<reference key="1">
    <citation type="journal article" date="2008" name="PLoS Genet.">
        <title>Complete genome sequence of the N2-fixing broad host range endophyte Klebsiella pneumoniae 342 and virulence predictions verified in mice.</title>
        <authorList>
            <person name="Fouts D.E."/>
            <person name="Tyler H.L."/>
            <person name="DeBoy R.T."/>
            <person name="Daugherty S."/>
            <person name="Ren Q."/>
            <person name="Badger J.H."/>
            <person name="Durkin A.S."/>
            <person name="Huot H."/>
            <person name="Shrivastava S."/>
            <person name="Kothari S."/>
            <person name="Dodson R.J."/>
            <person name="Mohamoud Y."/>
            <person name="Khouri H."/>
            <person name="Roesch L.F.W."/>
            <person name="Krogfelt K.A."/>
            <person name="Struve C."/>
            <person name="Triplett E.W."/>
            <person name="Methe B.A."/>
        </authorList>
    </citation>
    <scope>NUCLEOTIDE SEQUENCE [LARGE SCALE GENOMIC DNA]</scope>
    <source>
        <strain>342</strain>
    </source>
</reference>
<proteinExistence type="inferred from homology"/>
<comment type="function">
    <text evidence="1">Hydrolyzes diadenosine 5',5'''-P1,P4-tetraphosphate to yield ADP.</text>
</comment>
<comment type="catalytic activity">
    <reaction evidence="1">
        <text>P(1),P(4)-bis(5'-adenosyl) tetraphosphate + H2O = 2 ADP + 2 H(+)</text>
        <dbReference type="Rhea" id="RHEA:24252"/>
        <dbReference type="ChEBI" id="CHEBI:15377"/>
        <dbReference type="ChEBI" id="CHEBI:15378"/>
        <dbReference type="ChEBI" id="CHEBI:58141"/>
        <dbReference type="ChEBI" id="CHEBI:456216"/>
        <dbReference type="EC" id="3.6.1.41"/>
    </reaction>
</comment>
<comment type="similarity">
    <text evidence="1">Belongs to the Ap4A hydrolase family.</text>
</comment>
<keyword id="KW-0378">Hydrolase</keyword>
<feature type="chain" id="PRO_1000099326" description="Bis(5'-nucleosyl)-tetraphosphatase, symmetrical">
    <location>
        <begin position="1"/>
        <end position="282"/>
    </location>
</feature>
<gene>
    <name evidence="1" type="primary">apaH</name>
    <name type="ordered locus">KPK_4696</name>
</gene>
<evidence type="ECO:0000255" key="1">
    <source>
        <dbReference type="HAMAP-Rule" id="MF_00199"/>
    </source>
</evidence>